<reference key="1">
    <citation type="journal article" date="1997" name="Nature">
        <title>Molecular basis of symbiosis between Rhizobium and legumes.</title>
        <authorList>
            <person name="Freiberg C.A."/>
            <person name="Fellay R."/>
            <person name="Bairoch A."/>
            <person name="Broughton W.J."/>
            <person name="Rosenthal A."/>
            <person name="Perret X."/>
        </authorList>
    </citation>
    <scope>NUCLEOTIDE SEQUENCE [LARGE SCALE GENOMIC DNA]</scope>
    <source>
        <strain>NBRC 101917 / NGR234</strain>
    </source>
</reference>
<reference key="2">
    <citation type="journal article" date="2009" name="Appl. Environ. Microbiol.">
        <title>Rhizobium sp. strain NGR234 possesses a remarkable number of secretion systems.</title>
        <authorList>
            <person name="Schmeisser C."/>
            <person name="Liesegang H."/>
            <person name="Krysciak D."/>
            <person name="Bakkou N."/>
            <person name="Le Quere A."/>
            <person name="Wollherr A."/>
            <person name="Heinemeyer I."/>
            <person name="Morgenstern B."/>
            <person name="Pommerening-Roeser A."/>
            <person name="Flores M."/>
            <person name="Palacios R."/>
            <person name="Brenner S."/>
            <person name="Gottschalk G."/>
            <person name="Schmitz R.A."/>
            <person name="Broughton W.J."/>
            <person name="Perret X."/>
            <person name="Strittmatter A.W."/>
            <person name="Streit W.R."/>
        </authorList>
    </citation>
    <scope>NUCLEOTIDE SEQUENCE [LARGE SCALE GENOMIC DNA]</scope>
    <source>
        <strain>NBRC 101917 / NGR234</strain>
    </source>
</reference>
<gene>
    <name type="ordered locus">NGR_a00780</name>
    <name type="ORF">y4xK</name>
</gene>
<accession>P55703</accession>
<dbReference type="EMBL" id="U00090">
    <property type="protein sequence ID" value="AAB91934.1"/>
    <property type="molecule type" value="Genomic_DNA"/>
</dbReference>
<dbReference type="RefSeq" id="NP_444147.1">
    <property type="nucleotide sequence ID" value="NC_000914.2"/>
</dbReference>
<dbReference type="RefSeq" id="WP_010875119.1">
    <property type="nucleotide sequence ID" value="NC_000914.2"/>
</dbReference>
<dbReference type="SMR" id="P55703"/>
<dbReference type="KEGG" id="rhi:NGR_a00780"/>
<dbReference type="eggNOG" id="COG5461">
    <property type="taxonomic scope" value="Bacteria"/>
</dbReference>
<dbReference type="HOGENOM" id="CLU_1253941_0_0_5"/>
<dbReference type="OrthoDB" id="9802674at2"/>
<dbReference type="Proteomes" id="UP000001054">
    <property type="component" value="Plasmid pNGR234a"/>
</dbReference>
<dbReference type="GO" id="GO:0005886">
    <property type="term" value="C:plasma membrane"/>
    <property type="evidence" value="ECO:0007669"/>
    <property type="project" value="UniProtKB-SubCell"/>
</dbReference>
<dbReference type="InterPro" id="IPR019027">
    <property type="entry name" value="Pilus_biogenesis_CpaD-related"/>
</dbReference>
<dbReference type="InterPro" id="IPR013361">
    <property type="entry name" value="Pilus_CpaD"/>
</dbReference>
<dbReference type="NCBIfam" id="TIGR02522">
    <property type="entry name" value="pilus_cpaD"/>
    <property type="match status" value="1"/>
</dbReference>
<dbReference type="Pfam" id="PF09476">
    <property type="entry name" value="Pilus_CpaD"/>
    <property type="match status" value="1"/>
</dbReference>
<dbReference type="PROSITE" id="PS51257">
    <property type="entry name" value="PROKAR_LIPOPROTEIN"/>
    <property type="match status" value="1"/>
</dbReference>
<protein>
    <recommendedName>
        <fullName>Uncharacterized lipoprotein y4xK</fullName>
    </recommendedName>
</protein>
<comment type="subcellular location">
    <subcellularLocation>
        <location evidence="2">Cell membrane</location>
        <topology evidence="2">Lipid-anchor</topology>
    </subcellularLocation>
</comment>
<keyword id="KW-1003">Cell membrane</keyword>
<keyword id="KW-0449">Lipoprotein</keyword>
<keyword id="KW-0472">Membrane</keyword>
<keyword id="KW-0564">Palmitate</keyword>
<keyword id="KW-0614">Plasmid</keyword>
<keyword id="KW-1185">Reference proteome</keyword>
<keyword id="KW-0732">Signal</keyword>
<feature type="signal peptide" evidence="1">
    <location>
        <begin position="1"/>
        <end position="18"/>
    </location>
</feature>
<feature type="chain" id="PRO_0000014171" description="Uncharacterized lipoprotein y4xK">
    <location>
        <begin position="19"/>
        <end position="188"/>
    </location>
</feature>
<feature type="lipid moiety-binding region" description="N-palmitoyl cysteine" evidence="2">
    <location>
        <position position="19"/>
    </location>
</feature>
<feature type="lipid moiety-binding region" description="S-diacylglycerol cysteine" evidence="2">
    <location>
        <position position="19"/>
    </location>
</feature>
<name>Y4XK_SINFN</name>
<evidence type="ECO:0000255" key="1">
    <source>
        <dbReference type="PROSITE-ProRule" id="PRU00303"/>
    </source>
</evidence>
<evidence type="ECO:0000305" key="2"/>
<proteinExistence type="inferred from homology"/>
<organism>
    <name type="scientific">Sinorhizobium fredii (strain NBRC 101917 / NGR234)</name>
    <dbReference type="NCBI Taxonomy" id="394"/>
    <lineage>
        <taxon>Bacteria</taxon>
        <taxon>Pseudomonadati</taxon>
        <taxon>Pseudomonadota</taxon>
        <taxon>Alphaproteobacteria</taxon>
        <taxon>Hyphomicrobiales</taxon>
        <taxon>Rhizobiaceae</taxon>
        <taxon>Sinorhizobium/Ensifer group</taxon>
        <taxon>Sinorhizobium</taxon>
    </lineage>
</organism>
<sequence>MTLRIIAHLLALTASLAGCTSTAPIYVEQPTPIFVRQESTVLKLESFHASEQQRLLAFLWKASRGRRDALHLVISGSSRLSAEAVHQARQMGIGASNIHLLDQNDRGHLRIEAVVYHALPPICRSLSSQLLNDEFFDQPIGCSTSHNLAVMINDPRDLLGNRFVKPSDGDRAAIPVTTYRTSTGKGGL</sequence>
<geneLocation type="plasmid">
    <name>sym pNGR234a</name>
</geneLocation>